<comment type="function">
    <text evidence="1">Catalyzes the radical-mediated synthesis of 7,8-didemethyl-8-hydroxy-5-deazariboflavin from 5-amino-5-(4-hydroxybenzyl)-6-(D-ribitylimino)-5,6-dihydrouracil.</text>
</comment>
<comment type="catalytic activity">
    <reaction evidence="1">
        <text>5-amino-5-(4-hydroxybenzyl)-6-(D-ribitylimino)-5,6-dihydrouracil + S-adenosyl-L-methionine = 7,8-didemethyl-8-hydroxy-5-deazariboflavin + 5'-deoxyadenosine + L-methionine + NH4(+) + H(+)</text>
        <dbReference type="Rhea" id="RHEA:55204"/>
        <dbReference type="ChEBI" id="CHEBI:15378"/>
        <dbReference type="ChEBI" id="CHEBI:17319"/>
        <dbReference type="ChEBI" id="CHEBI:28938"/>
        <dbReference type="ChEBI" id="CHEBI:57844"/>
        <dbReference type="ChEBI" id="CHEBI:59789"/>
        <dbReference type="ChEBI" id="CHEBI:59904"/>
        <dbReference type="ChEBI" id="CHEBI:85936"/>
        <dbReference type="EC" id="4.3.1.32"/>
    </reaction>
</comment>
<comment type="cofactor">
    <cofactor evidence="1">
        <name>[4Fe-4S] cluster</name>
        <dbReference type="ChEBI" id="CHEBI:49883"/>
    </cofactor>
    <text evidence="1">Binds 1 [4Fe-4S] cluster. The cluster is coordinated with 3 cysteines and an exchangeable S-adenosyl-L-methionine.</text>
</comment>
<comment type="pathway">
    <text evidence="1">Cofactor biosynthesis; coenzyme F0 biosynthesis.</text>
</comment>
<comment type="subunit">
    <text evidence="1">Consists of two subunits, CofG and CofH.</text>
</comment>
<comment type="similarity">
    <text evidence="1">Belongs to the radical SAM superfamily. CofG family.</text>
</comment>
<gene>
    <name evidence="1" type="primary">cofG</name>
    <name type="ordered locus">OE_3722F</name>
</gene>
<evidence type="ECO:0000255" key="1">
    <source>
        <dbReference type="HAMAP-Rule" id="MF_01611"/>
    </source>
</evidence>
<evidence type="ECO:0000255" key="2">
    <source>
        <dbReference type="PROSITE-ProRule" id="PRU01266"/>
    </source>
</evidence>
<reference key="1">
    <citation type="journal article" date="2008" name="Genomics">
        <title>Evolution in the laboratory: the genome of Halobacterium salinarum strain R1 compared to that of strain NRC-1.</title>
        <authorList>
            <person name="Pfeiffer F."/>
            <person name="Schuster S.C."/>
            <person name="Broicher A."/>
            <person name="Falb M."/>
            <person name="Palm P."/>
            <person name="Rodewald K."/>
            <person name="Ruepp A."/>
            <person name="Soppa J."/>
            <person name="Tittor J."/>
            <person name="Oesterhelt D."/>
        </authorList>
    </citation>
    <scope>NUCLEOTIDE SEQUENCE [LARGE SCALE GENOMIC DNA]</scope>
    <source>
        <strain>ATCC 29341 / DSM 671 / R1</strain>
    </source>
</reference>
<dbReference type="EC" id="4.3.1.32" evidence="1"/>
<dbReference type="EMBL" id="AM774415">
    <property type="protein sequence ID" value="CAP14417.1"/>
    <property type="molecule type" value="Genomic_DNA"/>
</dbReference>
<dbReference type="SMR" id="B0R6P8"/>
<dbReference type="EnsemblBacteria" id="CAP14417">
    <property type="protein sequence ID" value="CAP14417"/>
    <property type="gene ID" value="OE_3722F"/>
</dbReference>
<dbReference type="KEGG" id="hsl:OE_3722F"/>
<dbReference type="HOGENOM" id="CLU_054174_0_0_2"/>
<dbReference type="PhylomeDB" id="B0R6P8"/>
<dbReference type="UniPathway" id="UPA00072"/>
<dbReference type="Proteomes" id="UP000001321">
    <property type="component" value="Chromosome"/>
</dbReference>
<dbReference type="GO" id="GO:0051539">
    <property type="term" value="F:4 iron, 4 sulfur cluster binding"/>
    <property type="evidence" value="ECO:0007669"/>
    <property type="project" value="UniProtKB-KW"/>
</dbReference>
<dbReference type="GO" id="GO:0044689">
    <property type="term" value="F:7,8-didemethyl-8-hydroxy-5-deazariboflavin synthase activity"/>
    <property type="evidence" value="ECO:0007669"/>
    <property type="project" value="UniProtKB-EC"/>
</dbReference>
<dbReference type="GO" id="GO:0005506">
    <property type="term" value="F:iron ion binding"/>
    <property type="evidence" value="ECO:0007669"/>
    <property type="project" value="UniProtKB-UniRule"/>
</dbReference>
<dbReference type="GO" id="GO:0016765">
    <property type="term" value="F:transferase activity, transferring alkyl or aryl (other than methyl) groups"/>
    <property type="evidence" value="ECO:0007669"/>
    <property type="project" value="InterPro"/>
</dbReference>
<dbReference type="CDD" id="cd01335">
    <property type="entry name" value="Radical_SAM"/>
    <property type="match status" value="1"/>
</dbReference>
<dbReference type="Gene3D" id="3.20.20.70">
    <property type="entry name" value="Aldolase class I"/>
    <property type="match status" value="1"/>
</dbReference>
<dbReference type="HAMAP" id="MF_01611">
    <property type="entry name" value="FO_synth_sub1"/>
    <property type="match status" value="1"/>
</dbReference>
<dbReference type="InterPro" id="IPR013785">
    <property type="entry name" value="Aldolase_TIM"/>
</dbReference>
<dbReference type="InterPro" id="IPR019939">
    <property type="entry name" value="CofG_family"/>
</dbReference>
<dbReference type="InterPro" id="IPR006638">
    <property type="entry name" value="Elp3/MiaA/NifB-like_rSAM"/>
</dbReference>
<dbReference type="InterPro" id="IPR034405">
    <property type="entry name" value="F420"/>
</dbReference>
<dbReference type="InterPro" id="IPR007197">
    <property type="entry name" value="rSAM"/>
</dbReference>
<dbReference type="NCBIfam" id="TIGR03550">
    <property type="entry name" value="F420_cofG"/>
    <property type="match status" value="1"/>
</dbReference>
<dbReference type="NCBIfam" id="NF004884">
    <property type="entry name" value="PRK06245.1"/>
    <property type="match status" value="1"/>
</dbReference>
<dbReference type="PANTHER" id="PTHR43076:SF15">
    <property type="entry name" value="7,8-DIDEMETHYL-8-HYDROXY-5-DEAZARIBOFLAVIN SYNTHASE"/>
    <property type="match status" value="1"/>
</dbReference>
<dbReference type="PANTHER" id="PTHR43076">
    <property type="entry name" value="FO SYNTHASE (COFH)"/>
    <property type="match status" value="1"/>
</dbReference>
<dbReference type="Pfam" id="PF04055">
    <property type="entry name" value="Radical_SAM"/>
    <property type="match status" value="1"/>
</dbReference>
<dbReference type="SFLD" id="SFLDF00294">
    <property type="entry name" value="7_8-didemethyl-8-hydroxy-5-dea"/>
    <property type="match status" value="1"/>
</dbReference>
<dbReference type="SFLD" id="SFLDS00029">
    <property type="entry name" value="Radical_SAM"/>
    <property type="match status" value="1"/>
</dbReference>
<dbReference type="SMART" id="SM00729">
    <property type="entry name" value="Elp3"/>
    <property type="match status" value="1"/>
</dbReference>
<dbReference type="SUPFAM" id="SSF102114">
    <property type="entry name" value="Radical SAM enzymes"/>
    <property type="match status" value="1"/>
</dbReference>
<dbReference type="PROSITE" id="PS51918">
    <property type="entry name" value="RADICAL_SAM"/>
    <property type="match status" value="1"/>
</dbReference>
<keyword id="KW-0004">4Fe-4S</keyword>
<keyword id="KW-0408">Iron</keyword>
<keyword id="KW-0411">Iron-sulfur</keyword>
<keyword id="KW-0456">Lyase</keyword>
<keyword id="KW-0479">Metal-binding</keyword>
<keyword id="KW-0949">S-adenosyl-L-methionine</keyword>
<proteinExistence type="inferred from homology"/>
<name>COFG_HALS3</name>
<accession>B0R6P8</accession>
<feature type="chain" id="PRO_0000335560" description="7,8-didemethyl-8-hydroxy-5-deazariboflavin synthase">
    <location>
        <begin position="1"/>
        <end position="367"/>
    </location>
</feature>
<feature type="domain" description="Radical SAM core" evidence="2">
    <location>
        <begin position="39"/>
        <end position="275"/>
    </location>
</feature>
<feature type="binding site" evidence="1">
    <location>
        <position position="53"/>
    </location>
    <ligand>
        <name>[4Fe-4S] cluster</name>
        <dbReference type="ChEBI" id="CHEBI:49883"/>
        <note>4Fe-4S-S-AdoMet</note>
    </ligand>
</feature>
<feature type="binding site" evidence="1">
    <location>
        <position position="57"/>
    </location>
    <ligand>
        <name>[4Fe-4S] cluster</name>
        <dbReference type="ChEBI" id="CHEBI:49883"/>
        <note>4Fe-4S-S-AdoMet</note>
    </ligand>
</feature>
<feature type="binding site" evidence="1">
    <location>
        <position position="60"/>
    </location>
    <ligand>
        <name>[4Fe-4S] cluster</name>
        <dbReference type="ChEBI" id="CHEBI:49883"/>
        <note>4Fe-4S-S-AdoMet</note>
    </ligand>
</feature>
<organism>
    <name type="scientific">Halobacterium salinarum (strain ATCC 29341 / DSM 671 / R1)</name>
    <dbReference type="NCBI Taxonomy" id="478009"/>
    <lineage>
        <taxon>Archaea</taxon>
        <taxon>Methanobacteriati</taxon>
        <taxon>Methanobacteriota</taxon>
        <taxon>Stenosarchaea group</taxon>
        <taxon>Halobacteria</taxon>
        <taxon>Halobacteriales</taxon>
        <taxon>Halobacteriaceae</taxon>
        <taxon>Halobacterium</taxon>
        <taxon>Halobacterium salinarum NRC-34001</taxon>
    </lineage>
</organism>
<sequence>MTETQFGGDEYDVSVSVSEAAVERALDVRPADVAPASSLTFARNVFVPLTTACRYTCTYCTYYDVPGEASLLTPEEIREQCRVGADAGCTEALFTFGDQPDDRYTAIHEQLGEWGYDSIHEYLRAACEIALEAGLLPHANPGDQTRAQMATVADVNASMGVMLETTADVQAHGGPRAKSPEQRLHTIDVAGDLGVPFTTGILVGIGEDWRDRAESLLAIRALHERHDHVQEVIVQPVRPNARWQGEPPGAETMRRVVAMARAVLPAEVGVQVPPNLTDVRGLVDCGVDDLGGVSPVTKDHINPDYAWPALDELSAIADHAGVPLRERLPVYERFLPADGGTADDGWVSQRIWRAIEDGDRYEAVRAE</sequence>
<protein>
    <recommendedName>
        <fullName evidence="1">7,8-didemethyl-8-hydroxy-5-deazariboflavin synthase</fullName>
        <ecNumber evidence="1">4.3.1.32</ecNumber>
    </recommendedName>
    <alternativeName>
        <fullName evidence="1">FO synthase subunit 1</fullName>
    </alternativeName>
</protein>